<comment type="function">
    <text evidence="1">May be involved in recombination.</text>
</comment>
<comment type="subcellular location">
    <subcellularLocation>
        <location evidence="1">Cytoplasm</location>
        <location evidence="1">Nucleoid</location>
    </subcellularLocation>
</comment>
<comment type="similarity">
    <text evidence="1">Belongs to the RdgC family.</text>
</comment>
<accession>Q8P3H3</accession>
<dbReference type="EMBL" id="AE008922">
    <property type="protein sequence ID" value="AAM43319.1"/>
    <property type="molecule type" value="Genomic_DNA"/>
</dbReference>
<dbReference type="RefSeq" id="NP_639437.1">
    <property type="nucleotide sequence ID" value="NC_003902.1"/>
</dbReference>
<dbReference type="RefSeq" id="WP_011039167.1">
    <property type="nucleotide sequence ID" value="NC_003902.1"/>
</dbReference>
<dbReference type="SMR" id="Q8P3H3"/>
<dbReference type="STRING" id="190485.XCC4098"/>
<dbReference type="EnsemblBacteria" id="AAM43319">
    <property type="protein sequence ID" value="AAM43319"/>
    <property type="gene ID" value="XCC4098"/>
</dbReference>
<dbReference type="KEGG" id="xcc:XCC4098"/>
<dbReference type="PATRIC" id="fig|190485.4.peg.4392"/>
<dbReference type="eggNOG" id="COG2974">
    <property type="taxonomic scope" value="Bacteria"/>
</dbReference>
<dbReference type="HOGENOM" id="CLU_052038_1_1_6"/>
<dbReference type="OrthoDB" id="5290530at2"/>
<dbReference type="Proteomes" id="UP000001010">
    <property type="component" value="Chromosome"/>
</dbReference>
<dbReference type="GO" id="GO:0043590">
    <property type="term" value="C:bacterial nucleoid"/>
    <property type="evidence" value="ECO:0000318"/>
    <property type="project" value="GO_Central"/>
</dbReference>
<dbReference type="GO" id="GO:0005737">
    <property type="term" value="C:cytoplasm"/>
    <property type="evidence" value="ECO:0007669"/>
    <property type="project" value="UniProtKB-UniRule"/>
</dbReference>
<dbReference type="GO" id="GO:0003690">
    <property type="term" value="F:double-stranded DNA binding"/>
    <property type="evidence" value="ECO:0000318"/>
    <property type="project" value="GO_Central"/>
</dbReference>
<dbReference type="GO" id="GO:0006310">
    <property type="term" value="P:DNA recombination"/>
    <property type="evidence" value="ECO:0007669"/>
    <property type="project" value="UniProtKB-UniRule"/>
</dbReference>
<dbReference type="GO" id="GO:0000018">
    <property type="term" value="P:regulation of DNA recombination"/>
    <property type="evidence" value="ECO:0000318"/>
    <property type="project" value="GO_Central"/>
</dbReference>
<dbReference type="HAMAP" id="MF_00194">
    <property type="entry name" value="RdgC"/>
    <property type="match status" value="1"/>
</dbReference>
<dbReference type="InterPro" id="IPR007476">
    <property type="entry name" value="RdgC"/>
</dbReference>
<dbReference type="NCBIfam" id="NF001464">
    <property type="entry name" value="PRK00321.1-5"/>
    <property type="match status" value="1"/>
</dbReference>
<dbReference type="NCBIfam" id="NF001465">
    <property type="entry name" value="PRK00321.1-6"/>
    <property type="match status" value="1"/>
</dbReference>
<dbReference type="PANTHER" id="PTHR38103">
    <property type="entry name" value="RECOMBINATION-ASSOCIATED PROTEIN RDGC"/>
    <property type="match status" value="1"/>
</dbReference>
<dbReference type="PANTHER" id="PTHR38103:SF1">
    <property type="entry name" value="RECOMBINATION-ASSOCIATED PROTEIN RDGC"/>
    <property type="match status" value="1"/>
</dbReference>
<dbReference type="Pfam" id="PF04381">
    <property type="entry name" value="RdgC"/>
    <property type="match status" value="1"/>
</dbReference>
<name>RDGC_XANCP</name>
<sequence>MFFRNLTLFRFPTTLDFSEIETLLPQVQLKPVGPLEMSSRGFISPFGRDEQDVLSHRLEDFLWLTVGGEDKILPGAVVNDLLERKVAEIEEKEGRRPGGKARKRLKDDLIHELLPRAFVKSSRTDAILDLQHGYIAVNTSSRKSGENVMSEIRGALGSFPALPLNAEVAPRAILTGWIAGEPLPEGLSLGEECEMKDPIEGGAVVKCQHQELRGDEIDKHLEAGKQVTKLALVMDDNLSFVLGDDLVIRKLKFLDGALDQLEHSEGDGARAELDARFALMSAEVRRLFLLLEDALKLSKAEA</sequence>
<protein>
    <recommendedName>
        <fullName evidence="1">Recombination-associated protein RdgC</fullName>
    </recommendedName>
</protein>
<gene>
    <name evidence="1" type="primary">rdgC</name>
    <name type="ordered locus">XCC4098</name>
</gene>
<proteinExistence type="inferred from homology"/>
<feature type="chain" id="PRO_0000211757" description="Recombination-associated protein RdgC">
    <location>
        <begin position="1"/>
        <end position="302"/>
    </location>
</feature>
<reference key="1">
    <citation type="journal article" date="2002" name="Nature">
        <title>Comparison of the genomes of two Xanthomonas pathogens with differing host specificities.</title>
        <authorList>
            <person name="da Silva A.C.R."/>
            <person name="Ferro J.A."/>
            <person name="Reinach F.C."/>
            <person name="Farah C.S."/>
            <person name="Furlan L.R."/>
            <person name="Quaggio R.B."/>
            <person name="Monteiro-Vitorello C.B."/>
            <person name="Van Sluys M.A."/>
            <person name="Almeida N.F. Jr."/>
            <person name="Alves L.M.C."/>
            <person name="do Amaral A.M."/>
            <person name="Bertolini M.C."/>
            <person name="Camargo L.E.A."/>
            <person name="Camarotte G."/>
            <person name="Cannavan F."/>
            <person name="Cardozo J."/>
            <person name="Chambergo F."/>
            <person name="Ciapina L.P."/>
            <person name="Cicarelli R.M.B."/>
            <person name="Coutinho L.L."/>
            <person name="Cursino-Santos J.R."/>
            <person name="El-Dorry H."/>
            <person name="Faria J.B."/>
            <person name="Ferreira A.J.S."/>
            <person name="Ferreira R.C.C."/>
            <person name="Ferro M.I.T."/>
            <person name="Formighieri E.F."/>
            <person name="Franco M.C."/>
            <person name="Greggio C.C."/>
            <person name="Gruber A."/>
            <person name="Katsuyama A.M."/>
            <person name="Kishi L.T."/>
            <person name="Leite R.P."/>
            <person name="Lemos E.G.M."/>
            <person name="Lemos M.V.F."/>
            <person name="Locali E.C."/>
            <person name="Machado M.A."/>
            <person name="Madeira A.M.B.N."/>
            <person name="Martinez-Rossi N.M."/>
            <person name="Martins E.C."/>
            <person name="Meidanis J."/>
            <person name="Menck C.F.M."/>
            <person name="Miyaki C.Y."/>
            <person name="Moon D.H."/>
            <person name="Moreira L.M."/>
            <person name="Novo M.T.M."/>
            <person name="Okura V.K."/>
            <person name="Oliveira M.C."/>
            <person name="Oliveira V.R."/>
            <person name="Pereira H.A."/>
            <person name="Rossi A."/>
            <person name="Sena J.A.D."/>
            <person name="Silva C."/>
            <person name="de Souza R.F."/>
            <person name="Spinola L.A.F."/>
            <person name="Takita M.A."/>
            <person name="Tamura R.E."/>
            <person name="Teixeira E.C."/>
            <person name="Tezza R.I.D."/>
            <person name="Trindade dos Santos M."/>
            <person name="Truffi D."/>
            <person name="Tsai S.M."/>
            <person name="White F.F."/>
            <person name="Setubal J.C."/>
            <person name="Kitajima J.P."/>
        </authorList>
    </citation>
    <scope>NUCLEOTIDE SEQUENCE [LARGE SCALE GENOMIC DNA]</scope>
    <source>
        <strain>ATCC 33913 / DSM 3586 / NCPPB 528 / LMG 568 / P 25</strain>
    </source>
</reference>
<keyword id="KW-0963">Cytoplasm</keyword>
<keyword id="KW-0233">DNA recombination</keyword>
<keyword id="KW-1185">Reference proteome</keyword>
<evidence type="ECO:0000255" key="1">
    <source>
        <dbReference type="HAMAP-Rule" id="MF_00194"/>
    </source>
</evidence>
<organism>
    <name type="scientific">Xanthomonas campestris pv. campestris (strain ATCC 33913 / DSM 3586 / NCPPB 528 / LMG 568 / P 25)</name>
    <dbReference type="NCBI Taxonomy" id="190485"/>
    <lineage>
        <taxon>Bacteria</taxon>
        <taxon>Pseudomonadati</taxon>
        <taxon>Pseudomonadota</taxon>
        <taxon>Gammaproteobacteria</taxon>
        <taxon>Lysobacterales</taxon>
        <taxon>Lysobacteraceae</taxon>
        <taxon>Xanthomonas</taxon>
    </lineage>
</organism>